<gene>
    <name evidence="1" type="primary">thiG</name>
    <name type="ordered locus">Mmc1_0670</name>
</gene>
<keyword id="KW-0963">Cytoplasm</keyword>
<keyword id="KW-1185">Reference proteome</keyword>
<keyword id="KW-0704">Schiff base</keyword>
<keyword id="KW-0784">Thiamine biosynthesis</keyword>
<keyword id="KW-0808">Transferase</keyword>
<name>THIG_MAGMM</name>
<feature type="chain" id="PRO_1000196871" description="Thiazole synthase">
    <location>
        <begin position="1"/>
        <end position="326"/>
    </location>
</feature>
<feature type="active site" description="Schiff-base intermediate with DXP" evidence="1">
    <location>
        <position position="168"/>
    </location>
</feature>
<feature type="binding site" evidence="1">
    <location>
        <position position="229"/>
    </location>
    <ligand>
        <name>1-deoxy-D-xylulose 5-phosphate</name>
        <dbReference type="ChEBI" id="CHEBI:57792"/>
    </ligand>
</feature>
<feature type="binding site" evidence="1">
    <location>
        <begin position="255"/>
        <end position="256"/>
    </location>
    <ligand>
        <name>1-deoxy-D-xylulose 5-phosphate</name>
        <dbReference type="ChEBI" id="CHEBI:57792"/>
    </ligand>
</feature>
<feature type="binding site" evidence="1">
    <location>
        <begin position="277"/>
        <end position="278"/>
    </location>
    <ligand>
        <name>1-deoxy-D-xylulose 5-phosphate</name>
        <dbReference type="ChEBI" id="CHEBI:57792"/>
    </ligand>
</feature>
<reference key="1">
    <citation type="journal article" date="2009" name="Appl. Environ. Microbiol.">
        <title>Complete genome sequence of the chemolithoautotrophic marine magnetotactic coccus strain MC-1.</title>
        <authorList>
            <person name="Schubbe S."/>
            <person name="Williams T.J."/>
            <person name="Xie G."/>
            <person name="Kiss H.E."/>
            <person name="Brettin T.S."/>
            <person name="Martinez D."/>
            <person name="Ross C.A."/>
            <person name="Schuler D."/>
            <person name="Cox B.L."/>
            <person name="Nealson K.H."/>
            <person name="Bazylinski D.A."/>
        </authorList>
    </citation>
    <scope>NUCLEOTIDE SEQUENCE [LARGE SCALE GENOMIC DNA]</scope>
    <source>
        <strain>ATCC BAA-1437 / JCM 17883 / MC-1</strain>
    </source>
</reference>
<sequence>MKIHLNGEPHNAEAGTTLEGLLMGLGFAPEKVAVERNKAVVSRGTYGAVVLQEDDQIEVVHFIGGGQHPPADSWSVAGLTFNSRLLVGTGKYKDFEETKIAIEASGAEIVTVAVRRVNVSNPNAPMLTDYIDPKKYTYLPNTAGCFTAEDAVRTLRLAREAGGWDLVKLEVLSDEKYLWPNNPETLKAAEILVQEGFKVMVYTTDDPHMCKRFEDLGCVAVMPLAAPIGSGLGVRNPYTTRIIVEQAKVPVLVDAGVGTASDAAIAMELGCDGVLMNTAIAGAKDPILMAHAMKHAVLAGRQAYLAGRIQKKLYATASSPLDGTFF</sequence>
<protein>
    <recommendedName>
        <fullName evidence="1">Thiazole synthase</fullName>
        <ecNumber evidence="1">2.8.1.10</ecNumber>
    </recommendedName>
</protein>
<evidence type="ECO:0000255" key="1">
    <source>
        <dbReference type="HAMAP-Rule" id="MF_00443"/>
    </source>
</evidence>
<organism>
    <name type="scientific">Magnetococcus marinus (strain ATCC BAA-1437 / JCM 17883 / MC-1)</name>
    <dbReference type="NCBI Taxonomy" id="156889"/>
    <lineage>
        <taxon>Bacteria</taxon>
        <taxon>Pseudomonadati</taxon>
        <taxon>Pseudomonadota</taxon>
        <taxon>Alphaproteobacteria</taxon>
        <taxon>Magnetococcales</taxon>
        <taxon>Magnetococcaceae</taxon>
        <taxon>Magnetococcus</taxon>
    </lineage>
</organism>
<accession>A0L5E8</accession>
<proteinExistence type="inferred from homology"/>
<comment type="function">
    <text evidence="1">Catalyzes the rearrangement of 1-deoxy-D-xylulose 5-phosphate (DXP) to produce the thiazole phosphate moiety of thiamine. Sulfur is provided by the thiocarboxylate moiety of the carrier protein ThiS. In vitro, sulfur can be provided by H(2)S.</text>
</comment>
<comment type="catalytic activity">
    <reaction evidence="1">
        <text>[ThiS sulfur-carrier protein]-C-terminal-Gly-aminoethanethioate + 2-iminoacetate + 1-deoxy-D-xylulose 5-phosphate = [ThiS sulfur-carrier protein]-C-terminal Gly-Gly + 2-[(2R,5Z)-2-carboxy-4-methylthiazol-5(2H)-ylidene]ethyl phosphate + 2 H2O + H(+)</text>
        <dbReference type="Rhea" id="RHEA:26297"/>
        <dbReference type="Rhea" id="RHEA-COMP:12909"/>
        <dbReference type="Rhea" id="RHEA-COMP:19908"/>
        <dbReference type="ChEBI" id="CHEBI:15377"/>
        <dbReference type="ChEBI" id="CHEBI:15378"/>
        <dbReference type="ChEBI" id="CHEBI:57792"/>
        <dbReference type="ChEBI" id="CHEBI:62899"/>
        <dbReference type="ChEBI" id="CHEBI:77846"/>
        <dbReference type="ChEBI" id="CHEBI:90778"/>
        <dbReference type="ChEBI" id="CHEBI:232372"/>
        <dbReference type="EC" id="2.8.1.10"/>
    </reaction>
</comment>
<comment type="pathway">
    <text evidence="1">Cofactor biosynthesis; thiamine diphosphate biosynthesis.</text>
</comment>
<comment type="subunit">
    <text evidence="1">Homotetramer. Forms heterodimers with either ThiH or ThiS.</text>
</comment>
<comment type="subcellular location">
    <subcellularLocation>
        <location evidence="1">Cytoplasm</location>
    </subcellularLocation>
</comment>
<comment type="similarity">
    <text evidence="1">Belongs to the ThiG family.</text>
</comment>
<dbReference type="EC" id="2.8.1.10" evidence="1"/>
<dbReference type="EMBL" id="CP000471">
    <property type="protein sequence ID" value="ABK43191.1"/>
    <property type="molecule type" value="Genomic_DNA"/>
</dbReference>
<dbReference type="RefSeq" id="WP_011712354.1">
    <property type="nucleotide sequence ID" value="NC_008576.1"/>
</dbReference>
<dbReference type="SMR" id="A0L5E8"/>
<dbReference type="STRING" id="156889.Mmc1_0670"/>
<dbReference type="KEGG" id="mgm:Mmc1_0670"/>
<dbReference type="eggNOG" id="COG2022">
    <property type="taxonomic scope" value="Bacteria"/>
</dbReference>
<dbReference type="eggNOG" id="COG2104">
    <property type="taxonomic scope" value="Bacteria"/>
</dbReference>
<dbReference type="HOGENOM" id="CLU_062233_1_1_5"/>
<dbReference type="OrthoDB" id="9805935at2"/>
<dbReference type="UniPathway" id="UPA00060"/>
<dbReference type="Proteomes" id="UP000002586">
    <property type="component" value="Chromosome"/>
</dbReference>
<dbReference type="GO" id="GO:0005737">
    <property type="term" value="C:cytoplasm"/>
    <property type="evidence" value="ECO:0007669"/>
    <property type="project" value="UniProtKB-SubCell"/>
</dbReference>
<dbReference type="GO" id="GO:1990107">
    <property type="term" value="F:thiazole synthase activity"/>
    <property type="evidence" value="ECO:0007669"/>
    <property type="project" value="UniProtKB-EC"/>
</dbReference>
<dbReference type="GO" id="GO:0009229">
    <property type="term" value="P:thiamine diphosphate biosynthetic process"/>
    <property type="evidence" value="ECO:0007669"/>
    <property type="project" value="UniProtKB-UniRule"/>
</dbReference>
<dbReference type="CDD" id="cd04728">
    <property type="entry name" value="ThiG"/>
    <property type="match status" value="1"/>
</dbReference>
<dbReference type="CDD" id="cd00565">
    <property type="entry name" value="Ubl_ThiS"/>
    <property type="match status" value="1"/>
</dbReference>
<dbReference type="Gene3D" id="3.10.20.30">
    <property type="match status" value="1"/>
</dbReference>
<dbReference type="Gene3D" id="3.20.20.70">
    <property type="entry name" value="Aldolase class I"/>
    <property type="match status" value="1"/>
</dbReference>
<dbReference type="HAMAP" id="MF_00443">
    <property type="entry name" value="ThiG"/>
    <property type="match status" value="1"/>
</dbReference>
<dbReference type="InterPro" id="IPR013785">
    <property type="entry name" value="Aldolase_TIM"/>
</dbReference>
<dbReference type="InterPro" id="IPR012675">
    <property type="entry name" value="Beta-grasp_dom_sf"/>
</dbReference>
<dbReference type="InterPro" id="IPR016155">
    <property type="entry name" value="Mopterin_synth/thiamin_S_b"/>
</dbReference>
<dbReference type="InterPro" id="IPR010035">
    <property type="entry name" value="Thi_S"/>
</dbReference>
<dbReference type="InterPro" id="IPR033983">
    <property type="entry name" value="Thiazole_synthase_ThiG"/>
</dbReference>
<dbReference type="InterPro" id="IPR008867">
    <property type="entry name" value="ThiG"/>
</dbReference>
<dbReference type="InterPro" id="IPR003749">
    <property type="entry name" value="ThiS/MoaD-like"/>
</dbReference>
<dbReference type="NCBIfam" id="TIGR01683">
    <property type="entry name" value="thiS"/>
    <property type="match status" value="1"/>
</dbReference>
<dbReference type="PANTHER" id="PTHR34266">
    <property type="entry name" value="THIAZOLE SYNTHASE"/>
    <property type="match status" value="1"/>
</dbReference>
<dbReference type="PANTHER" id="PTHR34266:SF2">
    <property type="entry name" value="THIAZOLE SYNTHASE"/>
    <property type="match status" value="1"/>
</dbReference>
<dbReference type="Pfam" id="PF05690">
    <property type="entry name" value="ThiG"/>
    <property type="match status" value="1"/>
</dbReference>
<dbReference type="Pfam" id="PF02597">
    <property type="entry name" value="ThiS"/>
    <property type="match status" value="1"/>
</dbReference>
<dbReference type="SUPFAM" id="SSF54285">
    <property type="entry name" value="MoaD/ThiS"/>
    <property type="match status" value="1"/>
</dbReference>
<dbReference type="SUPFAM" id="SSF110399">
    <property type="entry name" value="ThiG-like"/>
    <property type="match status" value="1"/>
</dbReference>